<proteinExistence type="evidence at protein level"/>
<gene>
    <name evidence="7" type="primary">waaJ</name>
    <name evidence="6" type="synonym">rfaJ</name>
    <name evidence="5" type="synonym">waaR</name>
    <name type="ordered locus">b3626</name>
    <name type="ordered locus">JW3601</name>
</gene>
<name>WAAJ_ECOLI</name>
<organism>
    <name type="scientific">Escherichia coli (strain K12)</name>
    <dbReference type="NCBI Taxonomy" id="83333"/>
    <lineage>
        <taxon>Bacteria</taxon>
        <taxon>Pseudomonadati</taxon>
        <taxon>Pseudomonadota</taxon>
        <taxon>Gammaproteobacteria</taxon>
        <taxon>Enterobacterales</taxon>
        <taxon>Enterobacteriaceae</taxon>
        <taxon>Escherichia</taxon>
    </lineage>
</organism>
<comment type="function">
    <text evidence="4">Glucosyltransferase involved in the biosynthesis of the core oligosaccharide region of lipopolysaccharide (LPS) (PubMed:10234827). Catalyzes the addition of a glucose (glucose III) to the outer-core glucose II (PubMed:10234827).</text>
</comment>
<comment type="catalytic activity">
    <reaction evidence="4">
        <text>UDP-glucose + [lipopolysaccharide] = UDP + D-glucosyl-[lipopolysaccharide].</text>
        <dbReference type="EC" id="2.4.1.58"/>
    </reaction>
</comment>
<comment type="catalytic activity">
    <reaction evidence="4">
        <text>alpha-D-Glc-(1-&gt;3)-[alpha-D-Gal-(1-&gt;6)]-alpha-D-Glc-(1-&gt;3)-[L-alpha-D-Hep-(1-&gt;7)]-4-O-PO3(2-)-L-alpha-D-Hep-(1-&gt;3)-4-O-PO3(2-)-L-alpha-D-Hep-(1-&gt;5)-[alpha-Kdo-(2-&gt;4)]-alpha-Kdo-(2-&gt;6)-lipid A + UDP-alpha-D-glucose = alpha-D-Glc-(1-&gt;2)-alpha-D-Glc-(1-&gt;3)-[alpha-D-Gal-(1-&gt;6)]-alpha-D-Glc-(1-&gt;3)-[L-alpha-D-Hep-(1-&gt;7)]-4-O-PO3(2-)-L-alpha-D-Hep-(1-&gt;3)-4-O-PO3(2-)-L-alpha-D-Hep-(1-&gt;5)-[alpha-Kdo-(2-&gt;4)]-alpha-Kdo-(2-&gt;6)-lipid A + UDP + H(+)</text>
        <dbReference type="Rhea" id="RHEA:30015"/>
        <dbReference type="ChEBI" id="CHEBI:15378"/>
        <dbReference type="ChEBI" id="CHEBI:58223"/>
        <dbReference type="ChEBI" id="CHEBI:58885"/>
        <dbReference type="ChEBI" id="CHEBI:62002"/>
        <dbReference type="ChEBI" id="CHEBI:62003"/>
    </reaction>
</comment>
<comment type="cofactor">
    <cofactor evidence="2">
        <name>Mg(2+)</name>
        <dbReference type="ChEBI" id="CHEBI:18420"/>
    </cofactor>
</comment>
<comment type="pathway">
    <text evidence="4">Bacterial outer membrane biogenesis; LPS core biosynthesis.</text>
</comment>
<comment type="subcellular location">
    <subcellularLocation>
        <location evidence="8">Cell inner membrane</location>
    </subcellularLocation>
    <text evidence="3">Membrane associated.</text>
</comment>
<comment type="similarity">
    <text evidence="8">Belongs to the glycosyltransferase 8 family.</text>
</comment>
<evidence type="ECO:0000250" key="1">
    <source>
        <dbReference type="UniProtKB" id="A0A0H2URJ6"/>
    </source>
</evidence>
<evidence type="ECO:0000250" key="2">
    <source>
        <dbReference type="UniProtKB" id="P19816"/>
    </source>
</evidence>
<evidence type="ECO:0000250" key="3">
    <source>
        <dbReference type="UniProtKB" id="Q9ZIT6"/>
    </source>
</evidence>
<evidence type="ECO:0000269" key="4">
    <source>
    </source>
</evidence>
<evidence type="ECO:0000303" key="5">
    <source>
    </source>
</evidence>
<evidence type="ECO:0000303" key="6">
    <source>
    </source>
</evidence>
<evidence type="ECO:0000303" key="7">
    <source>
    </source>
</evidence>
<evidence type="ECO:0000305" key="8"/>
<feature type="chain" id="PRO_0000206066" description="Lipopolysaccharide 1,2-glucosyltransferase">
    <location>
        <begin position="1"/>
        <end position="338"/>
    </location>
</feature>
<feature type="short sequence motif" description="DXD 1" evidence="8">
    <location>
        <begin position="130"/>
        <end position="132"/>
    </location>
</feature>
<feature type="short sequence motif" description="DXD 2" evidence="8">
    <location>
        <begin position="215"/>
        <end position="217"/>
    </location>
</feature>
<feature type="binding site" evidence="1">
    <location>
        <begin position="33"/>
        <end position="38"/>
    </location>
    <ligand>
        <name>UDP</name>
        <dbReference type="ChEBI" id="CHEBI:58223"/>
    </ligand>
</feature>
<feature type="binding site" evidence="1">
    <location>
        <begin position="130"/>
        <end position="131"/>
    </location>
    <ligand>
        <name>UDP</name>
        <dbReference type="ChEBI" id="CHEBI:58223"/>
    </ligand>
</feature>
<feature type="binding site" evidence="1">
    <location>
        <position position="130"/>
    </location>
    <ligand>
        <name>Mg(2+)</name>
        <dbReference type="ChEBI" id="CHEBI:18420"/>
    </ligand>
</feature>
<feature type="binding site" evidence="1">
    <location>
        <position position="132"/>
    </location>
    <ligand>
        <name>Mg(2+)</name>
        <dbReference type="ChEBI" id="CHEBI:18420"/>
    </ligand>
</feature>
<feature type="binding site" evidence="1">
    <location>
        <begin position="264"/>
        <end position="270"/>
    </location>
    <ligand>
        <name>UDP</name>
        <dbReference type="ChEBI" id="CHEBI:58223"/>
    </ligand>
</feature>
<feature type="binding site" evidence="1">
    <location>
        <position position="264"/>
    </location>
    <ligand>
        <name>Mg(2+)</name>
        <dbReference type="ChEBI" id="CHEBI:18420"/>
    </ligand>
</feature>
<feature type="mutagenesis site" description="Loss of activity." evidence="4">
    <original>D</original>
    <variation>N</variation>
    <location>
        <position position="130"/>
    </location>
</feature>
<feature type="mutagenesis site" description="Loss of activity." evidence="4">
    <original>D</original>
    <variation>N</variation>
    <location>
        <position position="132"/>
    </location>
</feature>
<feature type="mutagenesis site" description="Loss of activity." evidence="4">
    <original>D</original>
    <variation>N</variation>
    <location>
        <position position="215"/>
    </location>
</feature>
<feature type="mutagenesis site" description="Loss of activity." evidence="4">
    <original>D</original>
    <variation>N</variation>
    <location>
        <position position="217"/>
    </location>
</feature>
<feature type="sequence conflict" description="In Ref. 1; AAA24087." evidence="8" ref="1">
    <original>RYKHLLVQHHYISGIIAGVCYLCRKYYRK</original>
    <variation>DINIF</variation>
    <location>
        <begin position="310"/>
        <end position="338"/>
    </location>
</feature>
<dbReference type="EC" id="2.4.1.58" evidence="4"/>
<dbReference type="EMBL" id="M80599">
    <property type="protein sequence ID" value="AAA24087.1"/>
    <property type="molecule type" value="Genomic_DNA"/>
</dbReference>
<dbReference type="EMBL" id="U00039">
    <property type="protein sequence ID" value="AAB18603.1"/>
    <property type="molecule type" value="Genomic_DNA"/>
</dbReference>
<dbReference type="EMBL" id="U00096">
    <property type="protein sequence ID" value="AAC76650.1"/>
    <property type="molecule type" value="Genomic_DNA"/>
</dbReference>
<dbReference type="EMBL" id="AP009048">
    <property type="protein sequence ID" value="BAE77666.1"/>
    <property type="molecule type" value="Genomic_DNA"/>
</dbReference>
<dbReference type="PIR" id="S47847">
    <property type="entry name" value="S47847"/>
</dbReference>
<dbReference type="RefSeq" id="NP_418083.1">
    <property type="nucleotide sequence ID" value="NC_000913.3"/>
</dbReference>
<dbReference type="RefSeq" id="WP_000376841.1">
    <property type="nucleotide sequence ID" value="NZ_LN832404.1"/>
</dbReference>
<dbReference type="SMR" id="P27129"/>
<dbReference type="BioGRID" id="4261893">
    <property type="interactions" value="201"/>
</dbReference>
<dbReference type="DIP" id="DIP-10671N"/>
<dbReference type="FunCoup" id="P27129">
    <property type="interactions" value="169"/>
</dbReference>
<dbReference type="IntAct" id="P27129">
    <property type="interactions" value="6"/>
</dbReference>
<dbReference type="STRING" id="511145.b3626"/>
<dbReference type="CAZy" id="GT8">
    <property type="family name" value="Glycosyltransferase Family 8"/>
</dbReference>
<dbReference type="jPOST" id="P27129"/>
<dbReference type="PaxDb" id="511145-b3626"/>
<dbReference type="EnsemblBacteria" id="AAC76650">
    <property type="protein sequence ID" value="AAC76650"/>
    <property type="gene ID" value="b3626"/>
</dbReference>
<dbReference type="GeneID" id="948142"/>
<dbReference type="KEGG" id="ecj:JW3601"/>
<dbReference type="KEGG" id="eco:b3626"/>
<dbReference type="KEGG" id="ecoc:C3026_19655"/>
<dbReference type="PATRIC" id="fig|1411691.4.peg.3080"/>
<dbReference type="EchoBASE" id="EB1328"/>
<dbReference type="eggNOG" id="COG1442">
    <property type="taxonomic scope" value="Bacteria"/>
</dbReference>
<dbReference type="HOGENOM" id="CLU_050833_5_0_6"/>
<dbReference type="InParanoid" id="P27129"/>
<dbReference type="OMA" id="NYMVGVD"/>
<dbReference type="OrthoDB" id="9807549at2"/>
<dbReference type="PhylomeDB" id="P27129"/>
<dbReference type="BioCyc" id="EcoCyc:EG11353-MONOMER"/>
<dbReference type="BioCyc" id="MetaCyc:EG11353-MONOMER"/>
<dbReference type="UniPathway" id="UPA00958"/>
<dbReference type="PRO" id="PR:P27129"/>
<dbReference type="Proteomes" id="UP000000625">
    <property type="component" value="Chromosome"/>
</dbReference>
<dbReference type="GO" id="GO:0005886">
    <property type="term" value="C:plasma membrane"/>
    <property type="evidence" value="ECO:0007005"/>
    <property type="project" value="EcoCyc"/>
</dbReference>
<dbReference type="GO" id="GO:0008918">
    <property type="term" value="F:lipopolysaccharide 3-alpha-galactosyltransferase activity"/>
    <property type="evidence" value="ECO:0007669"/>
    <property type="project" value="InterPro"/>
</dbReference>
<dbReference type="GO" id="GO:0008919">
    <property type="term" value="F:lipopolysaccharide glucosyltransferase I activity"/>
    <property type="evidence" value="ECO:0000314"/>
    <property type="project" value="EcoCyc"/>
</dbReference>
<dbReference type="GO" id="GO:0046872">
    <property type="term" value="F:metal ion binding"/>
    <property type="evidence" value="ECO:0007669"/>
    <property type="project" value="UniProtKB-KW"/>
</dbReference>
<dbReference type="GO" id="GO:0009244">
    <property type="term" value="P:lipopolysaccharide core region biosynthetic process"/>
    <property type="evidence" value="ECO:0000315"/>
    <property type="project" value="EcoCyc"/>
</dbReference>
<dbReference type="CDD" id="cd04194">
    <property type="entry name" value="GT8_A4GalT_like"/>
    <property type="match status" value="1"/>
</dbReference>
<dbReference type="FunFam" id="3.90.550.10:FF:000288">
    <property type="entry name" value="Lipopolysaccharide 1,2-glucosyltransferase"/>
    <property type="match status" value="1"/>
</dbReference>
<dbReference type="Gene3D" id="3.90.550.10">
    <property type="entry name" value="Spore Coat Polysaccharide Biosynthesis Protein SpsA, Chain A"/>
    <property type="match status" value="1"/>
</dbReference>
<dbReference type="InterPro" id="IPR002495">
    <property type="entry name" value="Glyco_trans_8"/>
</dbReference>
<dbReference type="InterPro" id="IPR013645">
    <property type="entry name" value="Glyco_transf_8N"/>
</dbReference>
<dbReference type="InterPro" id="IPR050748">
    <property type="entry name" value="Glycosyltrans_8_dom-fam"/>
</dbReference>
<dbReference type="InterPro" id="IPR029044">
    <property type="entry name" value="Nucleotide-diphossugar_trans"/>
</dbReference>
<dbReference type="PANTHER" id="PTHR13778">
    <property type="entry name" value="GLYCOSYLTRANSFERASE 8 DOMAIN-CONTAINING PROTEIN"/>
    <property type="match status" value="1"/>
</dbReference>
<dbReference type="PANTHER" id="PTHR13778:SF64">
    <property type="entry name" value="LIPOPOLYSACCHARIDE 1,2-GLUCOSYLTRANSFERASE"/>
    <property type="match status" value="1"/>
</dbReference>
<dbReference type="Pfam" id="PF01501">
    <property type="entry name" value="Glyco_transf_8"/>
    <property type="match status" value="1"/>
</dbReference>
<dbReference type="Pfam" id="PF08437">
    <property type="entry name" value="Glyco_transf_8C"/>
    <property type="match status" value="1"/>
</dbReference>
<dbReference type="SUPFAM" id="SSF53448">
    <property type="entry name" value="Nucleotide-diphospho-sugar transferases"/>
    <property type="match status" value="1"/>
</dbReference>
<keyword id="KW-0997">Cell inner membrane</keyword>
<keyword id="KW-1003">Cell membrane</keyword>
<keyword id="KW-0328">Glycosyltransferase</keyword>
<keyword id="KW-0448">Lipopolysaccharide biosynthesis</keyword>
<keyword id="KW-0460">Magnesium</keyword>
<keyword id="KW-0472">Membrane</keyword>
<keyword id="KW-0479">Metal-binding</keyword>
<keyword id="KW-1185">Reference proteome</keyword>
<keyword id="KW-0808">Transferase</keyword>
<reference key="1">
    <citation type="journal article" date="1992" name="J. Bacteriol.">
        <title>Structures of the rfaB, rfaI, rfaJ, and rfaS genes of Escherichia coli K-12 and their roles in assembly of the lipopolysaccharide core.</title>
        <authorList>
            <person name="Pradel E."/>
            <person name="Parker C.T."/>
            <person name="Schnaitman C.A."/>
        </authorList>
    </citation>
    <scope>NUCLEOTIDE SEQUENCE [GENOMIC DNA]</scope>
    <source>
        <strain>K12</strain>
    </source>
</reference>
<reference key="2">
    <citation type="journal article" date="1994" name="Nucleic Acids Res.">
        <title>Analysis of the Escherichia coli genome. V. DNA sequence of the region from 76.0 to 81.5 minutes.</title>
        <authorList>
            <person name="Sofia H.J."/>
            <person name="Burland V."/>
            <person name="Daniels D.L."/>
            <person name="Plunkett G. III"/>
            <person name="Blattner F.R."/>
        </authorList>
    </citation>
    <scope>NUCLEOTIDE SEQUENCE [LARGE SCALE GENOMIC DNA]</scope>
    <source>
        <strain>K12 / MG1655 / ATCC 47076</strain>
    </source>
</reference>
<reference key="3">
    <citation type="journal article" date="1997" name="Science">
        <title>The complete genome sequence of Escherichia coli K-12.</title>
        <authorList>
            <person name="Blattner F.R."/>
            <person name="Plunkett G. III"/>
            <person name="Bloch C.A."/>
            <person name="Perna N.T."/>
            <person name="Burland V."/>
            <person name="Riley M."/>
            <person name="Collado-Vides J."/>
            <person name="Glasner J.D."/>
            <person name="Rode C.K."/>
            <person name="Mayhew G.F."/>
            <person name="Gregor J."/>
            <person name="Davis N.W."/>
            <person name="Kirkpatrick H.A."/>
            <person name="Goeden M.A."/>
            <person name="Rose D.J."/>
            <person name="Mau B."/>
            <person name="Shao Y."/>
        </authorList>
    </citation>
    <scope>NUCLEOTIDE SEQUENCE [LARGE SCALE GENOMIC DNA]</scope>
    <source>
        <strain>K12 / MG1655 / ATCC 47076</strain>
    </source>
</reference>
<reference key="4">
    <citation type="journal article" date="2006" name="Mol. Syst. Biol.">
        <title>Highly accurate genome sequences of Escherichia coli K-12 strains MG1655 and W3110.</title>
        <authorList>
            <person name="Hayashi K."/>
            <person name="Morooka N."/>
            <person name="Yamamoto Y."/>
            <person name="Fujita K."/>
            <person name="Isono K."/>
            <person name="Choi S."/>
            <person name="Ohtsubo E."/>
            <person name="Baba T."/>
            <person name="Wanner B.L."/>
            <person name="Mori H."/>
            <person name="Horiuchi T."/>
        </authorList>
    </citation>
    <scope>NUCLEOTIDE SEQUENCE [LARGE SCALE GENOMIC DNA]</scope>
    <source>
        <strain>K12 / W3110 / ATCC 27325 / DSM 5911</strain>
    </source>
</reference>
<reference key="5">
    <citation type="journal article" date="1996" name="Trends Microbiol.">
        <title>Bacterial polysaccharide synthesis and gene nomenclature.</title>
        <authorList>
            <person name="Reeves P.R."/>
            <person name="Hobbs M."/>
            <person name="Valvano M.A."/>
            <person name="Skurnik M."/>
            <person name="Whitfield C."/>
            <person name="Coplin D."/>
            <person name="Kido N."/>
            <person name="Klena J."/>
            <person name="Maskell D."/>
            <person name="Raetz C.R.H."/>
            <person name="Rick P.D."/>
        </authorList>
    </citation>
    <scope>NOMENCLATURE</scope>
</reference>
<reference key="6">
    <citation type="journal article" date="1999" name="FEMS Microbiol. Lett.">
        <title>Four critical aspartic acid residues potentially involved in the catalytic mechanism of Escherichia coli K-12 WaaR.</title>
        <authorList>
            <person name="Shibayama K."/>
            <person name="Ohsuka S."/>
            <person name="Sato K."/>
            <person name="Yokoyama K."/>
            <person name="Horii T."/>
            <person name="Ohta M."/>
        </authorList>
    </citation>
    <scope>FUNCTION</scope>
    <scope>CATALYTIC ACTIVITY</scope>
    <scope>PATHWAY</scope>
    <scope>MUTAGENESIS OF ASP-130; ASP-132; ASP-215 AND ASP-217</scope>
    <source>
        <strain>K12</strain>
    </source>
</reference>
<protein>
    <recommendedName>
        <fullName evidence="8">Lipopolysaccharide 1,2-glucosyltransferase</fullName>
        <ecNumber evidence="4">2.4.1.58</ecNumber>
    </recommendedName>
    <alternativeName>
        <fullName evidence="8">UDP-glucose:(glucosyl) LPS alpha 1,2-glucosyltransferase</fullName>
    </alternativeName>
</protein>
<accession>P27129</accession>
<accession>Q2M7U0</accession>
<sequence>MDSFPAIEIDKVKAWDFRLANINTSECLNVAYGVDANYLDGVGVSITSIVLNNRHINLDFYIIADVYNDGFFQKIAKLAEQNQLRITLYRINTDKLQCLPCTQVWSRAMYFRLFAFQLLGLTLDRLLYLDADVVCKGDISQLLHLGLNGAVAAVVKDVEPMQEKAVSRLSDPELLGQYFNSGVVYLDLKKWADAKLTEKALSILMSKDNVYKYPDQDVMNVLLKGMTLFLPREYNTIYTIKSELKDKTHQNYKKLITESTLLIHYTGATKPWHKWAIYPSVKYYKIALENSPWKDDSPRDAKSIIEFKKRYKHLLVQHHYISGIIAGVCYLCRKYYRK</sequence>